<reference key="1">
    <citation type="journal article" date="1993" name="J. Virol.">
        <title>African swine fever virus encodes a serine protein kinase which is packaged into virions.</title>
        <authorList>
            <person name="Baylis S.A."/>
            <person name="Banham A.H."/>
            <person name="Vydelingum S."/>
            <person name="Dixon L.K."/>
            <person name="Smith G.L."/>
        </authorList>
    </citation>
    <scope>NUCLEOTIDE SEQUENCE [GENOMIC DNA]</scope>
    <scope>SUBCELLULAR LOCATION</scope>
    <scope>FUNCTION</scope>
</reference>
<reference key="2">
    <citation type="journal article" date="1993" name="Arch. Virol.">
        <title>Three adjacent genes of African swine fever virus with similarity to essential poxvirus genes.</title>
        <authorList>
            <person name="Roberts P.C."/>
            <person name="Lu Z."/>
            <person name="Kutish G.F."/>
            <person name="Rock D.L."/>
        </authorList>
    </citation>
    <scope>NUCLEOTIDE SEQUENCE [GENOMIC DNA]</scope>
</reference>
<reference key="3">
    <citation type="journal article" date="1994" name="J. Gen. Virol.">
        <title>Nucleotide sequence of a 55 kbp region from the right end of the genome of a pathogenic African swine fever virus isolate (Malawi LIL20/1).</title>
        <authorList>
            <person name="Dixon L.K."/>
            <person name="Twigg S.R.F."/>
            <person name="Baylis S.A."/>
            <person name="Vydelingum S."/>
            <person name="Bristow C."/>
            <person name="Hammond J.M."/>
            <person name="Smith G.L."/>
        </authorList>
    </citation>
    <scope>NUCLEOTIDE SEQUENCE [GENOMIC DNA]</scope>
</reference>
<reference key="4">
    <citation type="submission" date="2003-03" db="EMBL/GenBank/DDBJ databases">
        <title>African swine fever virus genomes.</title>
        <authorList>
            <person name="Kutish G.F."/>
            <person name="Rock D.L."/>
        </authorList>
    </citation>
    <scope>NUCLEOTIDE SEQUENCE [LARGE SCALE GENOMIC DNA]</scope>
</reference>
<sequence>MSRPEQQFKKVLKNPQAQYAVYPTIKVERISTTEHMYFIATKPMFEGGRRNNVFLGHQVGQPVVFKYVSKKEIPGNEVVVMKALQDTPGVIKLIEYTENAMYHILIIEYIPNSIDLLHYHYFKKLEENEAKKIIFQMILIIQNIYEKGFIHGDIKDENLIIDIDQKIIKVIDFGSAVRLNETHPQYNMFGTWEYVCPEFYYYGYYYQLPLTVWTIGMVAVNLFRFRAENFYLNDILKGENYIPDNISETGKQFITDCLTINENKRLSFKGLVSHPWFKGLKKEIQPISELGVDYKNVIT</sequence>
<feature type="chain" id="PRO_0000086540" description="Serine/threonine-protein kinase 1">
    <location>
        <begin position="1"/>
        <end position="299"/>
    </location>
</feature>
<feature type="domain" description="Protein kinase" evidence="2">
    <location>
        <begin position="39"/>
        <end position="277"/>
    </location>
</feature>
<feature type="active site" description="Proton acceptor" evidence="2 3">
    <location>
        <position position="153"/>
    </location>
</feature>
<feature type="binding site" evidence="2">
    <location>
        <begin position="45"/>
        <end position="53"/>
    </location>
    <ligand>
        <name>ATP</name>
        <dbReference type="ChEBI" id="CHEBI:30616"/>
    </ligand>
</feature>
<feature type="binding site" evidence="2">
    <location>
        <position position="66"/>
    </location>
    <ligand>
        <name>ATP</name>
        <dbReference type="ChEBI" id="CHEBI:30616"/>
    </ligand>
</feature>
<organism>
    <name type="scientific">African swine fever virus (isolate Tick/Malawi/Lil 20-1/1983)</name>
    <name type="common">ASFV</name>
    <dbReference type="NCBI Taxonomy" id="10500"/>
    <lineage>
        <taxon>Viruses</taxon>
        <taxon>Varidnaviria</taxon>
        <taxon>Bamfordvirae</taxon>
        <taxon>Nucleocytoviricota</taxon>
        <taxon>Pokkesviricetes</taxon>
        <taxon>Asfuvirales</taxon>
        <taxon>Asfarviridae</taxon>
        <taxon>Asfivirus</taxon>
        <taxon>African swine fever virus</taxon>
    </lineage>
</organism>
<gene>
    <name type="ordered locus">Mal-129</name>
    <name type="ORF">j8L</name>
    <name type="ORF">j9L</name>
    <name type="ORF">L19IL</name>
</gene>
<proteinExistence type="inferred from homology"/>
<comment type="function">
    <text evidence="4">Essential for viral replication. It may mediate the virus progression through DNA replication.</text>
</comment>
<comment type="catalytic activity">
    <reaction>
        <text>L-seryl-[protein] + ATP = O-phospho-L-seryl-[protein] + ADP + H(+)</text>
        <dbReference type="Rhea" id="RHEA:17989"/>
        <dbReference type="Rhea" id="RHEA-COMP:9863"/>
        <dbReference type="Rhea" id="RHEA-COMP:11604"/>
        <dbReference type="ChEBI" id="CHEBI:15378"/>
        <dbReference type="ChEBI" id="CHEBI:29999"/>
        <dbReference type="ChEBI" id="CHEBI:30616"/>
        <dbReference type="ChEBI" id="CHEBI:83421"/>
        <dbReference type="ChEBI" id="CHEBI:456216"/>
        <dbReference type="EC" id="2.7.11.1"/>
    </reaction>
</comment>
<comment type="catalytic activity">
    <reaction>
        <text>L-threonyl-[protein] + ATP = O-phospho-L-threonyl-[protein] + ADP + H(+)</text>
        <dbReference type="Rhea" id="RHEA:46608"/>
        <dbReference type="Rhea" id="RHEA-COMP:11060"/>
        <dbReference type="Rhea" id="RHEA-COMP:11605"/>
        <dbReference type="ChEBI" id="CHEBI:15378"/>
        <dbReference type="ChEBI" id="CHEBI:30013"/>
        <dbReference type="ChEBI" id="CHEBI:30616"/>
        <dbReference type="ChEBI" id="CHEBI:61977"/>
        <dbReference type="ChEBI" id="CHEBI:456216"/>
        <dbReference type="EC" id="2.7.11.1"/>
    </reaction>
</comment>
<comment type="subcellular location">
    <subcellularLocation>
        <location evidence="4">Virion</location>
    </subcellularLocation>
    <subcellularLocation>
        <location evidence="1">Host cytoplasm</location>
    </subcellularLocation>
</comment>
<comment type="induction">
    <text evidence="5">Expressed in the late phase of the viral replicative cycle.</text>
</comment>
<comment type="similarity">
    <text evidence="2">Belongs to the protein kinase superfamily. Ser/Thr protein kinase family.</text>
</comment>
<protein>
    <recommendedName>
        <fullName>Serine/threonine-protein kinase 1</fullName>
        <ecNumber>2.7.11.1</ecNumber>
    </recommendedName>
</protein>
<evidence type="ECO:0000250" key="1"/>
<evidence type="ECO:0000255" key="2">
    <source>
        <dbReference type="PROSITE-ProRule" id="PRU00159"/>
    </source>
</evidence>
<evidence type="ECO:0000255" key="3">
    <source>
        <dbReference type="PROSITE-ProRule" id="PRU10027"/>
    </source>
</evidence>
<evidence type="ECO:0000269" key="4">
    <source>
    </source>
</evidence>
<evidence type="ECO:0000305" key="5"/>
<keyword id="KW-0067">ATP-binding</keyword>
<keyword id="KW-1035">Host cytoplasm</keyword>
<keyword id="KW-0418">Kinase</keyword>
<keyword id="KW-0547">Nucleotide-binding</keyword>
<keyword id="KW-0723">Serine/threonine-protein kinase</keyword>
<keyword id="KW-0808">Transferase</keyword>
<keyword id="KW-0946">Virion</keyword>
<organismHost>
    <name type="scientific">Ornithodoros</name>
    <name type="common">relapsing fever ticks</name>
    <dbReference type="NCBI Taxonomy" id="6937"/>
</organismHost>
<organismHost>
    <name type="scientific">Phacochoerus aethiopicus</name>
    <name type="common">Warthog</name>
    <dbReference type="NCBI Taxonomy" id="85517"/>
</organismHost>
<organismHost>
    <name type="scientific">Phacochoerus africanus</name>
    <name type="common">Warthog</name>
    <dbReference type="NCBI Taxonomy" id="41426"/>
</organismHost>
<organismHost>
    <name type="scientific">Potamochoerus larvatus</name>
    <name type="common">Bushpig</name>
    <dbReference type="NCBI Taxonomy" id="273792"/>
</organismHost>
<organismHost>
    <name type="scientific">Sus scrofa</name>
    <name type="common">Pig</name>
    <dbReference type="NCBI Taxonomy" id="9823"/>
</organismHost>
<dbReference type="EC" id="2.7.11.1"/>
<dbReference type="EMBL" id="X72954">
    <property type="protein sequence ID" value="CAA51459.1"/>
    <property type="molecule type" value="Genomic_DNA"/>
</dbReference>
<dbReference type="EMBL" id="M88275">
    <property type="protein sequence ID" value="AAA03220.1"/>
    <property type="molecule type" value="Genomic_DNA"/>
</dbReference>
<dbReference type="EMBL" id="X71982">
    <property type="protein sequence ID" value="CAA50828.1"/>
    <property type="molecule type" value="Genomic_DNA"/>
</dbReference>
<dbReference type="EMBL" id="AY261361">
    <property type="status" value="NOT_ANNOTATED_CDS"/>
    <property type="molecule type" value="Genomic_DNA"/>
</dbReference>
<dbReference type="PIR" id="A45703">
    <property type="entry name" value="A45703"/>
</dbReference>
<dbReference type="SMR" id="P34206"/>
<dbReference type="Proteomes" id="UP000000860">
    <property type="component" value="Segment"/>
</dbReference>
<dbReference type="GO" id="GO:0030430">
    <property type="term" value="C:host cell cytoplasm"/>
    <property type="evidence" value="ECO:0007669"/>
    <property type="project" value="UniProtKB-SubCell"/>
</dbReference>
<dbReference type="GO" id="GO:0044423">
    <property type="term" value="C:virion component"/>
    <property type="evidence" value="ECO:0007669"/>
    <property type="project" value="UniProtKB-KW"/>
</dbReference>
<dbReference type="GO" id="GO:0005524">
    <property type="term" value="F:ATP binding"/>
    <property type="evidence" value="ECO:0007669"/>
    <property type="project" value="UniProtKB-KW"/>
</dbReference>
<dbReference type="GO" id="GO:0106310">
    <property type="term" value="F:protein serine kinase activity"/>
    <property type="evidence" value="ECO:0007669"/>
    <property type="project" value="RHEA"/>
</dbReference>
<dbReference type="GO" id="GO:0004674">
    <property type="term" value="F:protein serine/threonine kinase activity"/>
    <property type="evidence" value="ECO:0007669"/>
    <property type="project" value="UniProtKB-KW"/>
</dbReference>
<dbReference type="GO" id="GO:0016032">
    <property type="term" value="P:viral process"/>
    <property type="evidence" value="ECO:0007669"/>
    <property type="project" value="InterPro"/>
</dbReference>
<dbReference type="Gene3D" id="1.10.510.10">
    <property type="entry name" value="Transferase(Phosphotransferase) domain 1"/>
    <property type="match status" value="1"/>
</dbReference>
<dbReference type="InterPro" id="IPR011009">
    <property type="entry name" value="Kinase-like_dom_sf"/>
</dbReference>
<dbReference type="InterPro" id="IPR051138">
    <property type="entry name" value="PIM_Ser/Thr_kinase"/>
</dbReference>
<dbReference type="InterPro" id="IPR000719">
    <property type="entry name" value="Prot_kinase_dom"/>
</dbReference>
<dbReference type="InterPro" id="IPR008271">
    <property type="entry name" value="Ser/Thr_kinase_AS"/>
</dbReference>
<dbReference type="InterPro" id="IPR016254">
    <property type="entry name" value="Ser/Thr_kinase_asfivir"/>
</dbReference>
<dbReference type="PANTHER" id="PTHR22984:SF25">
    <property type="entry name" value="PROTEIN KINASE DOMAIN-CONTAINING PROTEIN"/>
    <property type="match status" value="1"/>
</dbReference>
<dbReference type="PANTHER" id="PTHR22984">
    <property type="entry name" value="SERINE/THREONINE-PROTEIN KINASE PIM"/>
    <property type="match status" value="1"/>
</dbReference>
<dbReference type="Pfam" id="PF00069">
    <property type="entry name" value="Pkinase"/>
    <property type="match status" value="1"/>
</dbReference>
<dbReference type="PIRSF" id="PIRSF000657">
    <property type="entry name" value="Ser/Thr_PK_ASFV"/>
    <property type="match status" value="1"/>
</dbReference>
<dbReference type="SMART" id="SM00220">
    <property type="entry name" value="S_TKc"/>
    <property type="match status" value="1"/>
</dbReference>
<dbReference type="SUPFAM" id="SSF56112">
    <property type="entry name" value="Protein kinase-like (PK-like)"/>
    <property type="match status" value="1"/>
</dbReference>
<dbReference type="PROSITE" id="PS50011">
    <property type="entry name" value="PROTEIN_KINASE_DOM"/>
    <property type="match status" value="1"/>
</dbReference>
<dbReference type="PROSITE" id="PS00108">
    <property type="entry name" value="PROTEIN_KINASE_ST"/>
    <property type="match status" value="1"/>
</dbReference>
<name>PK1_ASFM2</name>
<accession>P34206</accession>